<evidence type="ECO:0000250" key="1"/>
<evidence type="ECO:0000250" key="2">
    <source>
        <dbReference type="UniProtKB" id="Q08775"/>
    </source>
</evidence>
<evidence type="ECO:0000250" key="3">
    <source>
        <dbReference type="UniProtKB" id="Q13950"/>
    </source>
</evidence>
<evidence type="ECO:0000250" key="4">
    <source>
        <dbReference type="UniProtKB" id="Q9Z2J9"/>
    </source>
</evidence>
<evidence type="ECO:0000255" key="5">
    <source>
        <dbReference type="PROSITE-ProRule" id="PRU00399"/>
    </source>
</evidence>
<evidence type="ECO:0000256" key="6">
    <source>
        <dbReference type="SAM" id="MobiDB-lite"/>
    </source>
</evidence>
<protein>
    <recommendedName>
        <fullName>Runt-related transcription factor 2</fullName>
    </recommendedName>
    <alternativeName>
        <fullName>Core-binding factor subunit alpha-1</fullName>
        <shortName>CBF-alpha-1</shortName>
    </alternativeName>
</protein>
<proteinExistence type="evidence at transcript level"/>
<accession>Q9XSB7</accession>
<sequence>MRVGVPPQIPRPSLNSAPSPFNPQGQSQITDPRQAQSPPPWSYDQSYPSYLSQMTSPSIHSTTPLSSTRGTGLPVITDVPRRISGASELGPFSDPRQFPSISSLTESRFSNPRMHYPATFTYTPPVTSGMS</sequence>
<name>RUNX2_HORSE</name>
<dbReference type="EMBL" id="AF113507">
    <property type="protein sequence ID" value="AAD26154.1"/>
    <property type="molecule type" value="mRNA"/>
</dbReference>
<dbReference type="STRING" id="9796.ENSECAP00000029341"/>
<dbReference type="InParanoid" id="Q9XSB7"/>
<dbReference type="Proteomes" id="UP000002281">
    <property type="component" value="Unplaced"/>
</dbReference>
<dbReference type="GO" id="GO:0005737">
    <property type="term" value="C:cytoplasm"/>
    <property type="evidence" value="ECO:0000250"/>
    <property type="project" value="UniProtKB"/>
</dbReference>
<dbReference type="GO" id="GO:0005634">
    <property type="term" value="C:nucleus"/>
    <property type="evidence" value="ECO:0000250"/>
    <property type="project" value="UniProtKB"/>
</dbReference>
<dbReference type="GO" id="GO:0005524">
    <property type="term" value="F:ATP binding"/>
    <property type="evidence" value="ECO:0007669"/>
    <property type="project" value="InterPro"/>
</dbReference>
<dbReference type="GO" id="GO:0003677">
    <property type="term" value="F:DNA binding"/>
    <property type="evidence" value="ECO:0007669"/>
    <property type="project" value="UniProtKB-KW"/>
</dbReference>
<dbReference type="GO" id="GO:0030154">
    <property type="term" value="P:cell differentiation"/>
    <property type="evidence" value="ECO:0007669"/>
    <property type="project" value="UniProtKB-KW"/>
</dbReference>
<dbReference type="GO" id="GO:0045669">
    <property type="term" value="P:positive regulation of osteoblast differentiation"/>
    <property type="evidence" value="ECO:0000250"/>
    <property type="project" value="UniProtKB"/>
</dbReference>
<dbReference type="GO" id="GO:0045944">
    <property type="term" value="P:positive regulation of transcription by RNA polymerase II"/>
    <property type="evidence" value="ECO:0000250"/>
    <property type="project" value="UniProtKB"/>
</dbReference>
<dbReference type="FunFam" id="4.10.770.10:FF:000001">
    <property type="entry name" value="Runt-related transcription factor"/>
    <property type="match status" value="1"/>
</dbReference>
<dbReference type="Gene3D" id="4.10.770.10">
    <property type="entry name" value="Signal Protein Aml-1b, Chain A, domain 3"/>
    <property type="match status" value="1"/>
</dbReference>
<dbReference type="InterPro" id="IPR000040">
    <property type="entry name" value="AML1_Runt"/>
</dbReference>
<dbReference type="InterPro" id="IPR027384">
    <property type="entry name" value="Runx_central_dom_sf"/>
</dbReference>
<dbReference type="PANTHER" id="PTHR11950">
    <property type="entry name" value="RUNT RELATED"/>
    <property type="match status" value="1"/>
</dbReference>
<dbReference type="PANTHER" id="PTHR11950:SF7">
    <property type="entry name" value="RUNT-RELATED TRANSCRIPTION FACTOR 2"/>
    <property type="match status" value="1"/>
</dbReference>
<organism>
    <name type="scientific">Equus caballus</name>
    <name type="common">Horse</name>
    <dbReference type="NCBI Taxonomy" id="9796"/>
    <lineage>
        <taxon>Eukaryota</taxon>
        <taxon>Metazoa</taxon>
        <taxon>Chordata</taxon>
        <taxon>Craniata</taxon>
        <taxon>Vertebrata</taxon>
        <taxon>Euteleostomi</taxon>
        <taxon>Mammalia</taxon>
        <taxon>Eutheria</taxon>
        <taxon>Laurasiatheria</taxon>
        <taxon>Perissodactyla</taxon>
        <taxon>Equidae</taxon>
        <taxon>Equus</taxon>
    </lineage>
</organism>
<reference key="1">
    <citation type="submission" date="1998-12" db="EMBL/GenBank/DDBJ databases">
        <title>Molecular cloning and expression of equine Cbfa1.</title>
        <authorList>
            <person name="Uemura T."/>
            <person name="Fu Z.W."/>
            <person name="Kato H."/>
        </authorList>
    </citation>
    <scope>NUCLEOTIDE SEQUENCE [MRNA]</scope>
</reference>
<keyword id="KW-0963">Cytoplasm</keyword>
<keyword id="KW-0221">Differentiation</keyword>
<keyword id="KW-0238">DNA-binding</keyword>
<keyword id="KW-0488">Methylation</keyword>
<keyword id="KW-0539">Nucleus</keyword>
<keyword id="KW-0597">Phosphoprotein</keyword>
<keyword id="KW-1185">Reference proteome</keyword>
<keyword id="KW-0804">Transcription</keyword>
<keyword id="KW-0805">Transcription regulation</keyword>
<feature type="chain" id="PRO_0000174658" description="Runt-related transcription factor 2">
    <location>
        <begin position="1" status="less than"/>
        <end position="131" status="greater than"/>
    </location>
</feature>
<feature type="domain" description="Runt" evidence="5">
    <location>
        <begin position="1" status="less than"/>
        <end position="10"/>
    </location>
</feature>
<feature type="region of interest" description="Disordered" evidence="6">
    <location>
        <begin position="1"/>
        <end position="75"/>
    </location>
</feature>
<feature type="compositionally biased region" description="Polar residues" evidence="6">
    <location>
        <begin position="13"/>
        <end position="36"/>
    </location>
</feature>
<feature type="compositionally biased region" description="Polar residues" evidence="6">
    <location>
        <begin position="43"/>
        <end position="70"/>
    </location>
</feature>
<feature type="modified residue" description="Asymmetric dimethylarginine" evidence="2">
    <location>
        <position position="11"/>
    </location>
</feature>
<feature type="non-terminal residue">
    <location>
        <position position="1"/>
    </location>
</feature>
<feature type="non-terminal residue">
    <location>
        <position position="131"/>
    </location>
</feature>
<comment type="function">
    <text evidence="3">Transcription factor involved in osteoblastic differentiation and skeletal morphogenesis. Essential for the maturation of osteoblasts and both intramembranous and endochondral ossification. CBF binds to the core site, 5'-PYGPYGGT-3', of a number of enhancers and promoters, including murine leukemia virus, polyomavirus enhancer, T-cell receptor enhancers, osteocalcin, osteopontin, bone sialoprotein, alpha 1(I) collagen, LCK, IL-3 and GM-CSF promoters. Inhibits KAT6B-dependent transcriptional activation. In osteoblasts, supports transcription activation: synergizes with SPEN/MINT to enhance FGFR2-mediated activation of the osteocalcin FGF-responsive element (OCFRE).</text>
</comment>
<comment type="subunit">
    <text evidence="2 3 4">Heterodimer of an alpha and a beta subunit. The alpha subunit binds DNA as a monomer and through the Runt domain. DNA-binding is increased by heterodimerization (By similarity). Interacts with XRCC6 (Ku70) and XRCC5 (Ku80). Interacts with CCNB1, KAT6A and KAT6B. Interacts with HIVEP3. Interacts with IFI204. Interaction with SATB2; the interaction results in enhanced DNA binding and transactivation by these transcription factors. Binds to HIPK3. Interacts with FOXO1 (via a C-terminal region); the interaction inhibits RUNX2 transcriptional activity towards BGLAP. This interaction is prevented on insulin or IGF1 stimulation as FOXO1 is exported from the nucleus. Interacts with FOXP3. Interacts with TMEM119. Interacts with OLFM2 (By similarity). Interacts with IPO7; the interaction inhibits RUNX2 nuclear translocation in osteoblasts (By similarity).</text>
</comment>
<comment type="subcellular location">
    <subcellularLocation>
        <location evidence="3">Nucleus</location>
    </subcellularLocation>
    <subcellularLocation>
        <location evidence="2">Cytoplasm</location>
    </subcellularLocation>
</comment>
<comment type="PTM">
    <text evidence="1">Phosphorylated; probably by MAP kinases (MAPK). Phosphorylation by HIPK3 is required for the SPEN/MINT and FGF2 transactivation during osteoblastic differentiation (By similarity).</text>
</comment>
<gene>
    <name type="primary">RUNX2</name>
    <name type="synonym">CBFA1</name>
</gene>